<keyword id="KW-0002">3D-structure</keyword>
<keyword id="KW-0067">ATP-binding</keyword>
<keyword id="KW-0120">Carbon dioxide fixation</keyword>
<keyword id="KW-0963">Cytoplasm</keyword>
<keyword id="KW-0238">DNA-binding</keyword>
<keyword id="KW-0378">Hydrolase</keyword>
<keyword id="KW-0547">Nucleotide-binding</keyword>
<keyword id="KW-0614">Plasmid</keyword>
<keyword id="KW-1185">Reference proteome</keyword>
<accession>B7KMS4</accession>
<comment type="function">
    <text evidence="1 2">McdA and McdB together mediate carboxysome (Cb) spacing, size, ultrastructure and probably inheritance in the cell, together they prevent Cb aggregation (By similarity). McdA is an ATPase that forms dynamic gradients on the nucleoid in response to adapter protein McdB, which associates with carboxysomes. The interplay between McdA gradients on the nucleoid and McdB-bound carboxysomes result in the equal spacing of Cbs along the cell length (By similarity). Binds DNA saturably and strongly in the presence of Mg(2+)ATP; without ATP, DNA-binding is very poor (tested with a mutant that should not be able to hydrolyze ATP, Asp-38-Ala) (PubMed:31106331). Decreasing the NaCl concentration increases DNA binding (PubMed:31106331).</text>
</comment>
<comment type="function">
    <text evidence="1">Incorrect positioning (aggregation) of carboxysomes results in reduced CO(2) fixation by encapsulated ribulose-1,5-bisphosphate carboxylase (RuBisCO, cbbL/cbbS), which leads to slower growth.</text>
</comment>
<comment type="catalytic activity">
    <reaction evidence="2">
        <text>ATP + H2O = ADP + phosphate + H(+)</text>
        <dbReference type="Rhea" id="RHEA:13065"/>
        <dbReference type="ChEBI" id="CHEBI:15377"/>
        <dbReference type="ChEBI" id="CHEBI:15378"/>
        <dbReference type="ChEBI" id="CHEBI:30616"/>
        <dbReference type="ChEBI" id="CHEBI:43474"/>
        <dbReference type="ChEBI" id="CHEBI:456216"/>
    </reaction>
</comment>
<comment type="subunit">
    <text evidence="2">Homodimerizes in the presence of ATP, making extra nucleotide contacts than with ADP or AMP-PNP. Each subunit binds 1 ATP molecule; Glu-147, Lys-151 and Arg-183 cross the dimer interface to contact ATP in the other subunit, while Phe-182, Arg-183 and Tyr-221 stack with the adenine base in their own subunit (PubMed:31106331). Forms a complex with McdB (PubMed:31106331).</text>
</comment>
<comment type="subcellular location">
    <subcellularLocation>
        <location evidence="1">Cytoplasm</location>
    </subcellularLocation>
    <subcellularLocation>
        <location evidence="7">Cytoplasm</location>
        <location evidence="7">Nucleoid</location>
    </subcellularLocation>
</comment>
<comment type="domain">
    <text evidence="2">Has an adenine-nucleotide sandwich dimer structure in common with ParA ATPases. Nucleotide-binding forces changes that create an ATP-binding pocket (PubMed:31106331).</text>
</comment>
<comment type="miscellaneous">
    <text evidence="5">A type 1 McdA protein.</text>
</comment>
<comment type="similarity">
    <text evidence="6">Belongs to the ParA family. McdA subfamily.</text>
</comment>
<reference evidence="8" key="1">
    <citation type="journal article" date="2011" name="MBio">
        <title>Novel metabolic attributes of the genus Cyanothece, comprising a group of unicellular nitrogen-fixing Cyanobacteria.</title>
        <authorList>
            <person name="Bandyopadhyay A."/>
            <person name="Elvitigala T."/>
            <person name="Welsh E."/>
            <person name="Stockel J."/>
            <person name="Liberton M."/>
            <person name="Min H."/>
            <person name="Sherman L.A."/>
            <person name="Pakrasi H.B."/>
        </authorList>
    </citation>
    <scope>NUCLEOTIDE SEQUENCE [LARGE SCALE GENOMIC DNA]</scope>
    <source>
        <strain>PCC 7424</strain>
        <plasmid>pP742402</plasmid>
    </source>
</reference>
<reference key="2">
    <citation type="journal article" date="2020" name="Mol. Biol. Evol.">
        <title>Origin and Evolution of Carboxysome Positioning Systems in Cyanobacteria.</title>
        <authorList>
            <person name="MacCready J.S."/>
            <person name="Basalla J.L."/>
            <person name="Vecchiarelli A.G."/>
        </authorList>
    </citation>
    <scope>CLASSIFICATION</scope>
    <source>
        <strain>PCC 7424</strain>
    </source>
</reference>
<reference key="3">
    <citation type="journal article" date="2021" name="Mol. Biol. Cell">
        <title>Dissection of the ATPase active site of McdA reveals the sequential steps essential for carboxysome distribution.</title>
        <authorList>
            <person name="Hakim P."/>
            <person name="Hoang Y."/>
            <person name="Vecchiarelli A.G."/>
        </authorList>
    </citation>
    <scope>DNA-BINDING</scope>
    <scope>MUTAGENESIS OF ASP-38</scope>
</reference>
<reference evidence="9 10" key="4">
    <citation type="journal article" date="2019" name="Nucleic Acids Res.">
        <title>Structures of maintenance of carboxysome distribution Walker-box McdA and McdB adaptor homologs.</title>
        <authorList>
            <person name="Schumacher M.A."/>
            <person name="Henderson M."/>
            <person name="Zhang H."/>
        </authorList>
    </citation>
    <scope>X-RAY CRYSTALLOGRAPHY (1.70 ANGSTROMS) IN COMPLEX WITH AND WITHOUT ATP ANALOGS AND MG(2+)</scope>
    <scope>CATALYTIC ACTIVITY</scope>
    <scope>SUBUNIT</scope>
    <scope>INTERACTION WITH MCDB</scope>
    <scope>DOMAIN</scope>
    <scope>DNA-BINDING</scope>
    <scope>MUTAGENESIS OF ASP-38 AND LYS-151</scope>
    <source>
        <strain>PCC 7424</strain>
        <plasmid>pP742402</plasmid>
    </source>
</reference>
<geneLocation type="plasmid">
    <name>pP742402</name>
</geneLocation>
<name>MCDA_GLOC7</name>
<gene>
    <name evidence="4" type="primary">mcdA</name>
    <name evidence="8" type="ordered locus">PCC7424_5529</name>
</gene>
<feature type="chain" id="PRO_0000459774" description="Maintenance of carboxysome distribution protein A">
    <location>
        <begin position="1"/>
        <end position="258"/>
    </location>
</feature>
<feature type="binding site" evidence="11">
    <location>
        <position position="11"/>
    </location>
    <ligand>
        <name>ATP</name>
        <dbReference type="ChEBI" id="CHEBI:30616"/>
        <label>1</label>
    </ligand>
</feature>
<feature type="binding site" evidence="2 9 10 11">
    <location>
        <position position="12"/>
    </location>
    <ligand>
        <name>ATP</name>
        <dbReference type="ChEBI" id="CHEBI:30616"/>
        <label>1</label>
    </ligand>
</feature>
<feature type="binding site" evidence="2 9 10 11">
    <location>
        <position position="13"/>
    </location>
    <ligand>
        <name>ATP</name>
        <dbReference type="ChEBI" id="CHEBI:30616"/>
        <label>1</label>
    </ligand>
</feature>
<feature type="binding site" evidence="2 9 10 11">
    <location>
        <position position="14"/>
    </location>
    <ligand>
        <name>ATP</name>
        <dbReference type="ChEBI" id="CHEBI:30616"/>
        <label>1</label>
    </ligand>
</feature>
<feature type="binding site" evidence="2 9 10 11">
    <location>
        <position position="15"/>
    </location>
    <ligand>
        <name>ATP</name>
        <dbReference type="ChEBI" id="CHEBI:30616"/>
        <label>1</label>
    </ligand>
</feature>
<feature type="binding site" evidence="2 9 10 11">
    <location>
        <position position="16"/>
    </location>
    <ligand>
        <name>ATP</name>
        <dbReference type="ChEBI" id="CHEBI:30616"/>
        <label>1</label>
    </ligand>
</feature>
<feature type="binding site" evidence="2 9 10 11">
    <location>
        <position position="16"/>
    </location>
    <ligand>
        <name>Mg(2+)</name>
        <dbReference type="ChEBI" id="CHEBI:18420"/>
    </ligand>
</feature>
<feature type="binding site" evidence="2 9 10 11">
    <location>
        <position position="17"/>
    </location>
    <ligand>
        <name>ATP</name>
        <dbReference type="ChEBI" id="CHEBI:30616"/>
        <label>1</label>
    </ligand>
</feature>
<feature type="binding site" evidence="11">
    <location>
        <position position="40"/>
    </location>
    <ligand>
        <name>ATP</name>
        <dbReference type="ChEBI" id="CHEBI:30616"/>
        <label>1</label>
    </ligand>
</feature>
<feature type="binding site" evidence="2 11">
    <location>
        <position position="147"/>
    </location>
    <ligand>
        <name>ATP</name>
        <dbReference type="ChEBI" id="CHEBI:30616"/>
        <label>2 in other subunit</label>
    </ligand>
</feature>
<feature type="binding site" evidence="2 11">
    <location>
        <position position="151"/>
    </location>
    <ligand>
        <name>ATP</name>
        <dbReference type="ChEBI" id="CHEBI:30616"/>
        <label>2 in other subunit</label>
    </ligand>
</feature>
<feature type="binding site" evidence="2">
    <location>
        <position position="182"/>
    </location>
    <ligand>
        <name>ATP</name>
        <dbReference type="ChEBI" id="CHEBI:30616"/>
        <label>1</label>
    </ligand>
</feature>
<feature type="binding site" evidence="2 11">
    <location>
        <position position="183"/>
    </location>
    <ligand>
        <name>ATP</name>
        <dbReference type="ChEBI" id="CHEBI:30616"/>
        <label>2 in other subunit</label>
    </ligand>
</feature>
<feature type="binding site" evidence="2 9 10 11">
    <location>
        <position position="216"/>
    </location>
    <ligand>
        <name>ATP</name>
        <dbReference type="ChEBI" id="CHEBI:30616"/>
        <label>1</label>
    </ligand>
</feature>
<feature type="binding site" evidence="9 10 11">
    <location>
        <position position="217"/>
    </location>
    <ligand>
        <name>ATP</name>
        <dbReference type="ChEBI" id="CHEBI:30616"/>
        <label>1</label>
    </ligand>
</feature>
<feature type="binding site" evidence="2 9 10 11">
    <location>
        <position position="218"/>
    </location>
    <ligand>
        <name>ATP</name>
        <dbReference type="ChEBI" id="CHEBI:30616"/>
        <label>1</label>
    </ligand>
</feature>
<feature type="binding site" evidence="2">
    <location>
        <position position="221"/>
    </location>
    <ligand>
        <name>ATP</name>
        <dbReference type="ChEBI" id="CHEBI:30616"/>
        <label>1</label>
    </ligand>
</feature>
<feature type="site" description="McdA subfamily signature lysine residue" evidence="4">
    <location>
        <position position="151"/>
    </location>
</feature>
<feature type="mutagenesis site" description="Binds DNA in the presence of ATP and Mg(2+), probably does not hydrolyze ATP, 7-fold reduction in ATP affinity; when associated with A-151. DNA-binding is significantly reduced." evidence="2 3">
    <original>D</original>
    <variation>A</variation>
    <location>
        <position position="38"/>
    </location>
</feature>
<feature type="mutagenesis site" description="7-fold reduction in ATP affinity; when associated with A-38." evidence="2">
    <original>K</original>
    <variation>A</variation>
    <location>
        <position position="151"/>
    </location>
</feature>
<feature type="strand" evidence="12">
    <location>
        <begin position="2"/>
        <end position="6"/>
    </location>
</feature>
<feature type="strand" evidence="12">
    <location>
        <begin position="9"/>
        <end position="14"/>
    </location>
</feature>
<feature type="helix" evidence="12">
    <location>
        <begin position="15"/>
        <end position="26"/>
    </location>
</feature>
<feature type="turn" evidence="12">
    <location>
        <begin position="27"/>
        <end position="29"/>
    </location>
</feature>
<feature type="strand" evidence="12">
    <location>
        <begin position="32"/>
        <end position="36"/>
    </location>
</feature>
<feature type="helix" evidence="12">
    <location>
        <begin position="42"/>
        <end position="46"/>
    </location>
</feature>
<feature type="helix" evidence="12">
    <location>
        <begin position="58"/>
        <end position="62"/>
    </location>
</feature>
<feature type="helix" evidence="12">
    <location>
        <begin position="68"/>
        <end position="71"/>
    </location>
</feature>
<feature type="strand" evidence="12">
    <location>
        <begin position="80"/>
        <end position="83"/>
    </location>
</feature>
<feature type="helix" evidence="12">
    <location>
        <begin position="87"/>
        <end position="91"/>
    </location>
</feature>
<feature type="helix" evidence="12">
    <location>
        <begin position="92"/>
        <end position="98"/>
    </location>
</feature>
<feature type="helix" evidence="12">
    <location>
        <begin position="102"/>
        <end position="104"/>
    </location>
</feature>
<feature type="helix" evidence="12">
    <location>
        <begin position="105"/>
        <end position="110"/>
    </location>
</feature>
<feature type="helix" evidence="12">
    <location>
        <begin position="111"/>
        <end position="113"/>
    </location>
</feature>
<feature type="turn" evidence="12">
    <location>
        <begin position="114"/>
        <end position="116"/>
    </location>
</feature>
<feature type="strand" evidence="12">
    <location>
        <begin position="118"/>
        <end position="123"/>
    </location>
</feature>
<feature type="strand" evidence="12">
    <location>
        <begin position="126"/>
        <end position="129"/>
    </location>
</feature>
<feature type="helix" evidence="12">
    <location>
        <begin position="130"/>
        <end position="137"/>
    </location>
</feature>
<feature type="strand" evidence="12">
    <location>
        <begin position="140"/>
        <end position="149"/>
    </location>
</feature>
<feature type="helix" evidence="12">
    <location>
        <begin position="150"/>
        <end position="168"/>
    </location>
</feature>
<feature type="strand" evidence="12">
    <location>
        <begin position="174"/>
        <end position="184"/>
    </location>
</feature>
<feature type="helix" evidence="12">
    <location>
        <begin position="193"/>
        <end position="205"/>
    </location>
</feature>
<feature type="helix" evidence="12">
    <location>
        <begin position="219"/>
        <end position="227"/>
    </location>
</feature>
<feature type="helix" evidence="12">
    <location>
        <begin position="231"/>
        <end position="234"/>
    </location>
</feature>
<feature type="helix" evidence="12">
    <location>
        <begin position="237"/>
        <end position="240"/>
    </location>
</feature>
<feature type="helix" evidence="12">
    <location>
        <begin position="241"/>
        <end position="251"/>
    </location>
</feature>
<sequence length="258" mass="27721">MKTLVIASLSGGQGKTTTAFFLGKLLSQSAKVLFIDADPQSNLTFFLGHEVEPSAPTLLELIKDMVEPADAVYSLANSNQFLIPSDDGLSNAQEYLASSGMGAVVLKARLKPLSEYFDYCIIDSPPARTQISIATIGAADQLLIPAEASTKGVNSLIRTLEIVQSLEKLGAFTGSILGVIPFRDKWFGLSQSKDSAGAIAAMKEVAPQLRIFPSILESERYKQALNQGILLSELGYPDLEKPFEGVKEALGIKQLVQI</sequence>
<proteinExistence type="evidence at protein level"/>
<protein>
    <recommendedName>
        <fullName evidence="4">Maintenance of carboxysome distribution protein A</fullName>
        <shortName evidence="4">McdA</shortName>
        <ecNumber evidence="2">3.6.4.-</ecNumber>
    </recommendedName>
</protein>
<dbReference type="EC" id="3.6.4.-" evidence="2"/>
<dbReference type="EMBL" id="CP001293">
    <property type="protein sequence ID" value="ACK74096.1"/>
    <property type="molecule type" value="Genomic_DNA"/>
</dbReference>
<dbReference type="RefSeq" id="WP_012599601.1">
    <property type="nucleotide sequence ID" value="NC_011737.1"/>
</dbReference>
<dbReference type="PDB" id="6NON">
    <property type="method" value="X-ray"/>
    <property type="resolution" value="2.68 A"/>
    <property type="chains" value="A/B=2-251"/>
</dbReference>
<dbReference type="PDB" id="6NOO">
    <property type="method" value="X-ray"/>
    <property type="resolution" value="2.50 A"/>
    <property type="chains" value="A/B=1-258"/>
</dbReference>
<dbReference type="PDB" id="6NOP">
    <property type="method" value="X-ray"/>
    <property type="resolution" value="1.70 A"/>
    <property type="chains" value="A/B=1-258"/>
</dbReference>
<dbReference type="PDBsum" id="6NON"/>
<dbReference type="PDBsum" id="6NOO"/>
<dbReference type="PDBsum" id="6NOP"/>
<dbReference type="SMR" id="B7KMS4"/>
<dbReference type="KEGG" id="cyc:PCC7424_5529"/>
<dbReference type="HOGENOM" id="CLU_037612_1_4_3"/>
<dbReference type="OrthoDB" id="479754at2"/>
<dbReference type="Proteomes" id="UP000002384">
    <property type="component" value="Plasmid pP742402"/>
</dbReference>
<dbReference type="GO" id="GO:0005737">
    <property type="term" value="C:cytoplasm"/>
    <property type="evidence" value="ECO:0007669"/>
    <property type="project" value="UniProtKB-SubCell"/>
</dbReference>
<dbReference type="GO" id="GO:0009295">
    <property type="term" value="C:nucleoid"/>
    <property type="evidence" value="ECO:0007669"/>
    <property type="project" value="UniProtKB-SubCell"/>
</dbReference>
<dbReference type="GO" id="GO:0005524">
    <property type="term" value="F:ATP binding"/>
    <property type="evidence" value="ECO:0007669"/>
    <property type="project" value="UniProtKB-KW"/>
</dbReference>
<dbReference type="GO" id="GO:0003677">
    <property type="term" value="F:DNA binding"/>
    <property type="evidence" value="ECO:0007669"/>
    <property type="project" value="UniProtKB-KW"/>
</dbReference>
<dbReference type="GO" id="GO:0016787">
    <property type="term" value="F:hydrolase activity"/>
    <property type="evidence" value="ECO:0007669"/>
    <property type="project" value="UniProtKB-KW"/>
</dbReference>
<dbReference type="GO" id="GO:0015977">
    <property type="term" value="P:carbon fixation"/>
    <property type="evidence" value="ECO:0007669"/>
    <property type="project" value="UniProtKB-KW"/>
</dbReference>
<dbReference type="CDD" id="cd02042">
    <property type="entry name" value="ParAB_family"/>
    <property type="match status" value="1"/>
</dbReference>
<dbReference type="Gene3D" id="3.40.50.300">
    <property type="entry name" value="P-loop containing nucleotide triphosphate hydrolases"/>
    <property type="match status" value="1"/>
</dbReference>
<dbReference type="InterPro" id="IPR025669">
    <property type="entry name" value="AAA_dom"/>
</dbReference>
<dbReference type="InterPro" id="IPR050678">
    <property type="entry name" value="DNA_Partitioning_ATPase"/>
</dbReference>
<dbReference type="InterPro" id="IPR027417">
    <property type="entry name" value="P-loop_NTPase"/>
</dbReference>
<dbReference type="PANTHER" id="PTHR13696:SF99">
    <property type="entry name" value="COBYRINIC ACID AC-DIAMIDE SYNTHASE"/>
    <property type="match status" value="1"/>
</dbReference>
<dbReference type="PANTHER" id="PTHR13696">
    <property type="entry name" value="P-LOOP CONTAINING NUCLEOSIDE TRIPHOSPHATE HYDROLASE"/>
    <property type="match status" value="1"/>
</dbReference>
<dbReference type="Pfam" id="PF13614">
    <property type="entry name" value="AAA_31"/>
    <property type="match status" value="1"/>
</dbReference>
<dbReference type="SUPFAM" id="SSF52540">
    <property type="entry name" value="P-loop containing nucleoside triphosphate hydrolases"/>
    <property type="match status" value="1"/>
</dbReference>
<organism>
    <name type="scientific">Gloeothece citriformis (strain PCC 7424)</name>
    <name type="common">Cyanothece sp. (strain PCC 7424)</name>
    <dbReference type="NCBI Taxonomy" id="65393"/>
    <lineage>
        <taxon>Bacteria</taxon>
        <taxon>Bacillati</taxon>
        <taxon>Cyanobacteriota</taxon>
        <taxon>Cyanophyceae</taxon>
        <taxon>Oscillatoriophycideae</taxon>
        <taxon>Chroococcales</taxon>
        <taxon>Aphanothecaceae</taxon>
        <taxon>Gloeothece</taxon>
        <taxon>Gloeothece citriformis</taxon>
    </lineage>
</organism>
<evidence type="ECO:0000250" key="1">
    <source>
        <dbReference type="UniProtKB" id="Q8GJM5"/>
    </source>
</evidence>
<evidence type="ECO:0000269" key="2">
    <source>
    </source>
</evidence>
<evidence type="ECO:0000269" key="3">
    <source>
    </source>
</evidence>
<evidence type="ECO:0000303" key="4">
    <source>
    </source>
</evidence>
<evidence type="ECO:0000303" key="5">
    <source>
    </source>
</evidence>
<evidence type="ECO:0000305" key="6"/>
<evidence type="ECO:0000305" key="7">
    <source>
    </source>
</evidence>
<evidence type="ECO:0000312" key="8">
    <source>
        <dbReference type="EMBL" id="ACK74096.1"/>
    </source>
</evidence>
<evidence type="ECO:0007744" key="9">
    <source>
        <dbReference type="PDB" id="6NON"/>
    </source>
</evidence>
<evidence type="ECO:0007744" key="10">
    <source>
        <dbReference type="PDB" id="6NOO"/>
    </source>
</evidence>
<evidence type="ECO:0007744" key="11">
    <source>
        <dbReference type="PDB" id="6NOP"/>
    </source>
</evidence>
<evidence type="ECO:0007829" key="12">
    <source>
        <dbReference type="PDB" id="6NOP"/>
    </source>
</evidence>